<comment type="function">
    <text evidence="1">Specifically methylates the N7 position of a guanine in 16S rRNA.</text>
</comment>
<comment type="subcellular location">
    <subcellularLocation>
        <location evidence="1">Cytoplasm</location>
    </subcellularLocation>
</comment>
<comment type="similarity">
    <text evidence="1">Belongs to the methyltransferase superfamily. RNA methyltransferase RsmG family.</text>
</comment>
<sequence length="211" mass="24136">MTLELLKKYFPALTDDQISKFEKLEELYKDWNLKINVVSRKDIDELYLRHILHSLGIVKVQSFNPGSKILDVGTGGGFPGIPLAIMHPESAFHLVDSIGKKIKVVDEVSEGLGLENVTSFNQRVEELNGNYDFIVSRAVAVMPTFVRWVKGKIAKENVHERKNGILYLKGGDLSDELKDYRTAKIFELSDYFEEDFFQTKKVVYLPMKYKG</sequence>
<proteinExistence type="inferred from homology"/>
<keyword id="KW-0963">Cytoplasm</keyword>
<keyword id="KW-0489">Methyltransferase</keyword>
<keyword id="KW-0698">rRNA processing</keyword>
<keyword id="KW-0949">S-adenosyl-L-methionine</keyword>
<keyword id="KW-0808">Transferase</keyword>
<feature type="chain" id="PRO_0000335356" description="Ribosomal RNA small subunit methyltransferase G">
    <location>
        <begin position="1"/>
        <end position="211"/>
    </location>
</feature>
<feature type="binding site" evidence="1">
    <location>
        <position position="73"/>
    </location>
    <ligand>
        <name>S-adenosyl-L-methionine</name>
        <dbReference type="ChEBI" id="CHEBI:59789"/>
    </ligand>
</feature>
<feature type="binding site" evidence="1">
    <location>
        <position position="78"/>
    </location>
    <ligand>
        <name>S-adenosyl-L-methionine</name>
        <dbReference type="ChEBI" id="CHEBI:59789"/>
    </ligand>
</feature>
<feature type="binding site" evidence="1">
    <location>
        <begin position="124"/>
        <end position="125"/>
    </location>
    <ligand>
        <name>S-adenosyl-L-methionine</name>
        <dbReference type="ChEBI" id="CHEBI:59789"/>
    </ligand>
</feature>
<feature type="binding site" evidence="1">
    <location>
        <position position="137"/>
    </location>
    <ligand>
        <name>S-adenosyl-L-methionine</name>
        <dbReference type="ChEBI" id="CHEBI:59789"/>
    </ligand>
</feature>
<dbReference type="EC" id="2.1.1.-" evidence="1"/>
<dbReference type="EMBL" id="CU207366">
    <property type="protein sequence ID" value="CAL65377.1"/>
    <property type="molecule type" value="Genomic_DNA"/>
</dbReference>
<dbReference type="SMR" id="A0LYD2"/>
<dbReference type="STRING" id="411154.GFO_0392"/>
<dbReference type="KEGG" id="gfo:GFO_0392"/>
<dbReference type="eggNOG" id="COG0357">
    <property type="taxonomic scope" value="Bacteria"/>
</dbReference>
<dbReference type="HOGENOM" id="CLU_065341_2_2_10"/>
<dbReference type="Proteomes" id="UP000000755">
    <property type="component" value="Chromosome"/>
</dbReference>
<dbReference type="GO" id="GO:0005829">
    <property type="term" value="C:cytosol"/>
    <property type="evidence" value="ECO:0007669"/>
    <property type="project" value="TreeGrafter"/>
</dbReference>
<dbReference type="GO" id="GO:0070043">
    <property type="term" value="F:rRNA (guanine-N7-)-methyltransferase activity"/>
    <property type="evidence" value="ECO:0007669"/>
    <property type="project" value="UniProtKB-UniRule"/>
</dbReference>
<dbReference type="CDD" id="cd02440">
    <property type="entry name" value="AdoMet_MTases"/>
    <property type="match status" value="1"/>
</dbReference>
<dbReference type="Gene3D" id="3.40.50.150">
    <property type="entry name" value="Vaccinia Virus protein VP39"/>
    <property type="match status" value="1"/>
</dbReference>
<dbReference type="HAMAP" id="MF_00074">
    <property type="entry name" value="16SrRNA_methyltr_G"/>
    <property type="match status" value="1"/>
</dbReference>
<dbReference type="InterPro" id="IPR003682">
    <property type="entry name" value="rRNA_ssu_MeTfrase_G"/>
</dbReference>
<dbReference type="InterPro" id="IPR029063">
    <property type="entry name" value="SAM-dependent_MTases_sf"/>
</dbReference>
<dbReference type="NCBIfam" id="TIGR00138">
    <property type="entry name" value="rsmG_gidB"/>
    <property type="match status" value="1"/>
</dbReference>
<dbReference type="PANTHER" id="PTHR31760">
    <property type="entry name" value="S-ADENOSYL-L-METHIONINE-DEPENDENT METHYLTRANSFERASES SUPERFAMILY PROTEIN"/>
    <property type="match status" value="1"/>
</dbReference>
<dbReference type="PANTHER" id="PTHR31760:SF0">
    <property type="entry name" value="S-ADENOSYL-L-METHIONINE-DEPENDENT METHYLTRANSFERASES SUPERFAMILY PROTEIN"/>
    <property type="match status" value="1"/>
</dbReference>
<dbReference type="Pfam" id="PF02527">
    <property type="entry name" value="GidB"/>
    <property type="match status" value="1"/>
</dbReference>
<dbReference type="PIRSF" id="PIRSF003078">
    <property type="entry name" value="GidB"/>
    <property type="match status" value="1"/>
</dbReference>
<dbReference type="SUPFAM" id="SSF53335">
    <property type="entry name" value="S-adenosyl-L-methionine-dependent methyltransferases"/>
    <property type="match status" value="1"/>
</dbReference>
<name>RSMG_CHRFK</name>
<protein>
    <recommendedName>
        <fullName evidence="1">Ribosomal RNA small subunit methyltransferase G</fullName>
        <ecNumber evidence="1">2.1.1.-</ecNumber>
    </recommendedName>
    <alternativeName>
        <fullName evidence="1">16S rRNA 7-methylguanosine methyltransferase</fullName>
        <shortName evidence="1">16S rRNA m7G methyltransferase</shortName>
    </alternativeName>
</protein>
<accession>A0LYD2</accession>
<reference key="1">
    <citation type="journal article" date="2006" name="Environ. Microbiol.">
        <title>Whole genome analysis of the marine Bacteroidetes'Gramella forsetii' reveals adaptations to degradation of polymeric organic matter.</title>
        <authorList>
            <person name="Bauer M."/>
            <person name="Kube M."/>
            <person name="Teeling H."/>
            <person name="Richter M."/>
            <person name="Lombardot T."/>
            <person name="Allers E."/>
            <person name="Wuerdemann C.A."/>
            <person name="Quast C."/>
            <person name="Kuhl H."/>
            <person name="Knaust F."/>
            <person name="Woebken D."/>
            <person name="Bischof K."/>
            <person name="Mussmann M."/>
            <person name="Choudhuri J.V."/>
            <person name="Meyer F."/>
            <person name="Reinhardt R."/>
            <person name="Amann R.I."/>
            <person name="Gloeckner F.O."/>
        </authorList>
    </citation>
    <scope>NUCLEOTIDE SEQUENCE [LARGE SCALE GENOMIC DNA]</scope>
    <source>
        <strain>DSM 17595 / CGMCC 1.15422 / KT0803</strain>
    </source>
</reference>
<organism>
    <name type="scientific">Christiangramia forsetii (strain DSM 17595 / CGMCC 1.15422 / KT0803)</name>
    <name type="common">Gramella forsetii</name>
    <dbReference type="NCBI Taxonomy" id="411154"/>
    <lineage>
        <taxon>Bacteria</taxon>
        <taxon>Pseudomonadati</taxon>
        <taxon>Bacteroidota</taxon>
        <taxon>Flavobacteriia</taxon>
        <taxon>Flavobacteriales</taxon>
        <taxon>Flavobacteriaceae</taxon>
        <taxon>Christiangramia</taxon>
    </lineage>
</organism>
<gene>
    <name evidence="1" type="primary">rsmG</name>
    <name type="ordered locus">GFO_0392</name>
</gene>
<evidence type="ECO:0000255" key="1">
    <source>
        <dbReference type="HAMAP-Rule" id="MF_00074"/>
    </source>
</evidence>